<gene>
    <name type="primary">TMEM151B</name>
</gene>
<dbReference type="EMBL" id="BC134569">
    <property type="protein sequence ID" value="AAI34570.1"/>
    <property type="molecule type" value="mRNA"/>
</dbReference>
<dbReference type="RefSeq" id="NP_001077251.1">
    <property type="nucleotide sequence ID" value="NM_001083782.1"/>
</dbReference>
<dbReference type="SMR" id="A4IFG4"/>
<dbReference type="FunCoup" id="A4IFG4">
    <property type="interactions" value="355"/>
</dbReference>
<dbReference type="STRING" id="9913.ENSBTAP00000061312"/>
<dbReference type="PaxDb" id="9913-ENSBTAP00000026906"/>
<dbReference type="Ensembl" id="ENSBTAT00000067107.1">
    <property type="protein sequence ID" value="ENSBTAP00000061312.1"/>
    <property type="gene ID" value="ENSBTAG00000020203.7"/>
</dbReference>
<dbReference type="GeneID" id="618096"/>
<dbReference type="KEGG" id="bta:618096"/>
<dbReference type="CTD" id="256472"/>
<dbReference type="VEuPathDB" id="HostDB:ENSBTAG00000020203"/>
<dbReference type="VGNC" id="VGNC:56289">
    <property type="gene designation" value="TMEM151A"/>
</dbReference>
<dbReference type="eggNOG" id="ENOG502QSYQ">
    <property type="taxonomic scope" value="Eukaryota"/>
</dbReference>
<dbReference type="GeneTree" id="ENSGT00390000013762"/>
<dbReference type="InParanoid" id="A4IFG4"/>
<dbReference type="OMA" id="IHSCGAV"/>
<dbReference type="OrthoDB" id="190434at2759"/>
<dbReference type="Proteomes" id="UP000009136">
    <property type="component" value="Chromosome 29"/>
</dbReference>
<dbReference type="Bgee" id="ENSBTAG00000020203">
    <property type="expression patterns" value="Expressed in floor plate of diencephalon and 63 other cell types or tissues"/>
</dbReference>
<dbReference type="GO" id="GO:0005783">
    <property type="term" value="C:endoplasmic reticulum"/>
    <property type="evidence" value="ECO:0000318"/>
    <property type="project" value="GO_Central"/>
</dbReference>
<dbReference type="GO" id="GO:0016020">
    <property type="term" value="C:membrane"/>
    <property type="evidence" value="ECO:0000318"/>
    <property type="project" value="GO_Central"/>
</dbReference>
<dbReference type="InterPro" id="IPR026767">
    <property type="entry name" value="Tmem151"/>
</dbReference>
<dbReference type="PANTHER" id="PTHR31893">
    <property type="entry name" value="TRANSMEMBRANE PROTEIN 151 HOMOLOG"/>
    <property type="match status" value="1"/>
</dbReference>
<dbReference type="PANTHER" id="PTHR31893:SF3">
    <property type="entry name" value="TRANSMEMBRANE PROTEIN 151A"/>
    <property type="match status" value="1"/>
</dbReference>
<dbReference type="Pfam" id="PF14857">
    <property type="entry name" value="TMEM151"/>
    <property type="match status" value="1"/>
</dbReference>
<keyword id="KW-0472">Membrane</keyword>
<keyword id="KW-1185">Reference proteome</keyword>
<keyword id="KW-0812">Transmembrane</keyword>
<keyword id="KW-1133">Transmembrane helix</keyword>
<evidence type="ECO:0000255" key="1"/>
<evidence type="ECO:0000256" key="2">
    <source>
        <dbReference type="SAM" id="MobiDB-lite"/>
    </source>
</evidence>
<evidence type="ECO:0000305" key="3"/>
<protein>
    <recommendedName>
        <fullName>Transmembrane protein 151B</fullName>
    </recommendedName>
</protein>
<accession>A4IFG4</accession>
<feature type="chain" id="PRO_0000307219" description="Transmembrane protein 151B">
    <location>
        <begin position="1"/>
        <end position="468"/>
    </location>
</feature>
<feature type="transmembrane region" description="Helical" evidence="1">
    <location>
        <begin position="45"/>
        <end position="65"/>
    </location>
</feature>
<feature type="transmembrane region" description="Helical" evidence="1">
    <location>
        <begin position="98"/>
        <end position="118"/>
    </location>
</feature>
<feature type="region of interest" description="Disordered" evidence="2">
    <location>
        <begin position="1"/>
        <end position="25"/>
    </location>
</feature>
<feature type="region of interest" description="Disordered" evidence="2">
    <location>
        <begin position="384"/>
        <end position="438"/>
    </location>
</feature>
<comment type="subcellular location">
    <subcellularLocation>
        <location evidence="3">Membrane</location>
        <topology evidence="3">Multi-pass membrane protein</topology>
    </subcellularLocation>
</comment>
<comment type="similarity">
    <text evidence="3">Belongs to the TMEM151 family.</text>
</comment>
<reference key="1">
    <citation type="submission" date="2007-03" db="EMBL/GenBank/DDBJ databases">
        <authorList>
            <consortium name="NIH - Mammalian Gene Collection (MGC) project"/>
        </authorList>
    </citation>
    <scope>NUCLEOTIDE SEQUENCE [LARGE SCALE MRNA]</scope>
    <source>
        <strain>Hereford</strain>
        <tissue>Basal ganglia</tissue>
    </source>
</reference>
<name>T151B_BOVIN</name>
<organism>
    <name type="scientific">Bos taurus</name>
    <name type="common">Bovine</name>
    <dbReference type="NCBI Taxonomy" id="9913"/>
    <lineage>
        <taxon>Eukaryota</taxon>
        <taxon>Metazoa</taxon>
        <taxon>Chordata</taxon>
        <taxon>Craniata</taxon>
        <taxon>Vertebrata</taxon>
        <taxon>Euteleostomi</taxon>
        <taxon>Mammalia</taxon>
        <taxon>Eutheria</taxon>
        <taxon>Laurasiatheria</taxon>
        <taxon>Artiodactyla</taxon>
        <taxon>Ruminantia</taxon>
        <taxon>Pecora</taxon>
        <taxon>Bovidae</taxon>
        <taxon>Bovinae</taxon>
        <taxon>Bos</taxon>
    </lineage>
</organism>
<sequence>MPEDGGGDSGDVPEIIPDGEPLREEQRPLKQSLGSSLCRESHWKCLLLTLLIHACGAVVAWCRLATVPRLVLGPEAALARGGGGPPPTYPASPCSDGYLYIPLAFVSLLYLLYLAECWHCHVRSCQAPRTDASTVLALIRRLQQAPPCVWWKATSYHYVRRTRQITRYRNGDAYTTTQVYHERADSRTARGEFDYSAHGVRDVSKELVGLADHAATRLRFTKCFSFGSAEAEASYLTQRARFFSANEGLDDYLEAREGMHLKDVDFRESLMVFADPRSPPWYARAWVFWLVSAATLSWPLRVVAAYGTAHVHYQVEKLFGASSPPPGAVPSGPPLSRVATVDFTELEWHICSNRQLVPSYSEAVVMGAGSGAYLRGCQRCRRSVSSNSLPPARPSGPRLPFSRSRLSLGAGGRATPGVFRSLSGGPLGRRGEDTEPLESPPCYEDALYFPVLIVHGDSGCQGDGQGAL</sequence>
<proteinExistence type="evidence at transcript level"/>